<reference key="1">
    <citation type="journal article" date="2004" name="Science">
        <title>The Ashbya gossypii genome as a tool for mapping the ancient Saccharomyces cerevisiae genome.</title>
        <authorList>
            <person name="Dietrich F.S."/>
            <person name="Voegeli S."/>
            <person name="Brachat S."/>
            <person name="Lerch A."/>
            <person name="Gates K."/>
            <person name="Steiner S."/>
            <person name="Mohr C."/>
            <person name="Poehlmann R."/>
            <person name="Luedi P."/>
            <person name="Choi S."/>
            <person name="Wing R.A."/>
            <person name="Flavier A."/>
            <person name="Gaffney T.D."/>
            <person name="Philippsen P."/>
        </authorList>
    </citation>
    <scope>NUCLEOTIDE SEQUENCE [LARGE SCALE GENOMIC DNA]</scope>
    <source>
        <strain>ATCC 10895 / CBS 109.51 / FGSC 9923 / NRRL Y-1056</strain>
    </source>
</reference>
<reference key="2">
    <citation type="journal article" date="2013" name="G3 (Bethesda)">
        <title>Genomes of Ashbya fungi isolated from insects reveal four mating-type loci, numerous translocations, lack of transposons, and distinct gene duplications.</title>
        <authorList>
            <person name="Dietrich F.S."/>
            <person name="Voegeli S."/>
            <person name="Kuo S."/>
            <person name="Philippsen P."/>
        </authorList>
    </citation>
    <scope>GENOME REANNOTATION</scope>
    <scope>SEQUENCE REVISION TO 530; 533 AND 536</scope>
    <source>
        <strain>ATCC 10895 / CBS 109.51 / FGSC 9923 / NRRL Y-1056</strain>
    </source>
</reference>
<gene>
    <name type="primary">LST4</name>
    <name type="ordered locus">AEL127C</name>
    <name type="ORF">AGOS_AEL127C</name>
</gene>
<accession>Q757Y7</accession>
<feature type="chain" id="PRO_0000324404" description="Protein LST4">
    <location>
        <begin position="1"/>
        <end position="691"/>
    </location>
</feature>
<feature type="domain" description="uDENN FNIP1/2-type" evidence="2">
    <location>
        <begin position="67"/>
        <end position="243"/>
    </location>
</feature>
<feature type="domain" description="cDENN FNIP1/2-type" evidence="2">
    <location>
        <begin position="251"/>
        <end position="601"/>
    </location>
</feature>
<feature type="domain" description="dDENN FNIP1/2-type" evidence="2">
    <location>
        <begin position="607"/>
        <end position="687"/>
    </location>
</feature>
<feature type="region of interest" description="Disordered" evidence="3">
    <location>
        <begin position="17"/>
        <end position="44"/>
    </location>
</feature>
<feature type="region of interest" description="Disordered" evidence="3">
    <location>
        <begin position="422"/>
        <end position="474"/>
    </location>
</feature>
<feature type="compositionally biased region" description="Basic and acidic residues" evidence="3">
    <location>
        <begin position="21"/>
        <end position="34"/>
    </location>
</feature>
<feature type="compositionally biased region" description="Polar residues" evidence="3">
    <location>
        <begin position="435"/>
        <end position="449"/>
    </location>
</feature>
<feature type="compositionally biased region" description="Low complexity" evidence="3">
    <location>
        <begin position="450"/>
        <end position="469"/>
    </location>
</feature>
<proteinExistence type="inferred from homology"/>
<name>LST4_EREGS</name>
<organism>
    <name type="scientific">Eremothecium gossypii (strain ATCC 10895 / CBS 109.51 / FGSC 9923 / NRRL Y-1056)</name>
    <name type="common">Yeast</name>
    <name type="synonym">Ashbya gossypii</name>
    <dbReference type="NCBI Taxonomy" id="284811"/>
    <lineage>
        <taxon>Eukaryota</taxon>
        <taxon>Fungi</taxon>
        <taxon>Dikarya</taxon>
        <taxon>Ascomycota</taxon>
        <taxon>Saccharomycotina</taxon>
        <taxon>Saccharomycetes</taxon>
        <taxon>Saccharomycetales</taxon>
        <taxon>Saccharomycetaceae</taxon>
        <taxon>Eremothecium</taxon>
    </lineage>
</organism>
<keyword id="KW-0029">Amino-acid transport</keyword>
<keyword id="KW-0653">Protein transport</keyword>
<keyword id="KW-1185">Reference proteome</keyword>
<keyword id="KW-0813">Transport</keyword>
<sequence>MLGRLLRTNSFIDLLGSFPNGKDDGKGPQPHHEATPPPSSMHMPDELRTLLYGCRKVEGEGRGGEGRGSGTFRLVVAQELGQMMSRDNYQVVLDCGGTRAAVGSGGAEMPLSELKEYIFGSPVRLSDRCRSDKLKLSRGARVIVVTRIFYTGYAGNARRLAVCCCIPEQFLTVVTECWSQVSAWFDEVQDVLMPLLEAEPLLPKDLRVSAPAQVDVLLHKFYRHLILPLHGLLETHRLFLYPADSLDFVTAWFREVFNWLEVKDGHRLKFLPALLGKLRHDAAAELLHNRSSRIVVMSGNVTVANKLIFILSAFLRPRYSGQVHYVDDGLAARNVELKEAPADPKYSSTITSKGWEIPRKRSRSSVLSKSSDETSFAHVFLPSSLRSTNSLQYISSSLNSQYGSYGSWFKKTIPLGHSPRINESPDNTFMHHHTNSTSSLQQQQAGTCASGNNASSVTTSTTPNTNRWSQGSPSISEYEEYPWLGYGTAPSGAPSKSRIQKVNMPRNSNRVHDKKLLHERFVSICGDVQEVDFHTSPATESYGAILEVPILEELSFPSQELLPRYSSYLPTLDPAFQVQACPITSNTERRLVDCMKQDLHNAEYSRTLLISLRSREIKEITITKDPSTKTIVQRTKKIFLNGKPGHVSQKLHEEIHFVDNHLTATWKKWEDPVESEDKTKLFITSFHELMK</sequence>
<evidence type="ECO:0000250" key="1"/>
<evidence type="ECO:0000255" key="2">
    <source>
        <dbReference type="PROSITE-ProRule" id="PRU01180"/>
    </source>
</evidence>
<evidence type="ECO:0000256" key="3">
    <source>
        <dbReference type="SAM" id="MobiDB-lite"/>
    </source>
</evidence>
<evidence type="ECO:0000305" key="4"/>
<comment type="function">
    <text evidence="1">Involved in extracellular amino acid uptake. Required for the protein trafficking from the Golgi to the plasma membrane (By similarity).</text>
</comment>
<comment type="similarity">
    <text evidence="4">Belongs to the LST4 family.</text>
</comment>
<protein>
    <recommendedName>
        <fullName>Protein LST4</fullName>
    </recommendedName>
</protein>
<dbReference type="EMBL" id="AE016818">
    <property type="protein sequence ID" value="AAS52558.2"/>
    <property type="molecule type" value="Genomic_DNA"/>
</dbReference>
<dbReference type="RefSeq" id="NP_984734.2">
    <property type="nucleotide sequence ID" value="NM_210088.2"/>
</dbReference>
<dbReference type="SMR" id="Q757Y7"/>
<dbReference type="FunCoup" id="Q757Y7">
    <property type="interactions" value="60"/>
</dbReference>
<dbReference type="STRING" id="284811.Q757Y7"/>
<dbReference type="EnsemblFungi" id="AAS52558">
    <property type="protein sequence ID" value="AAS52558"/>
    <property type="gene ID" value="AGOS_AEL127C"/>
</dbReference>
<dbReference type="GeneID" id="4620921"/>
<dbReference type="KEGG" id="ago:AGOS_AEL127C"/>
<dbReference type="eggNOG" id="ENOG502QPJF">
    <property type="taxonomic scope" value="Eukaryota"/>
</dbReference>
<dbReference type="HOGENOM" id="CLU_010482_0_0_1"/>
<dbReference type="InParanoid" id="Q757Y7"/>
<dbReference type="OMA" id="SEYDEYP"/>
<dbReference type="OrthoDB" id="4063558at2759"/>
<dbReference type="Proteomes" id="UP000000591">
    <property type="component" value="Chromosome V"/>
</dbReference>
<dbReference type="GO" id="GO:1990877">
    <property type="term" value="C:FNIP-folliculin RagC/D GAP"/>
    <property type="evidence" value="ECO:0007669"/>
    <property type="project" value="EnsemblFungi"/>
</dbReference>
<dbReference type="GO" id="GO:0005774">
    <property type="term" value="C:vacuolar membrane"/>
    <property type="evidence" value="ECO:0007669"/>
    <property type="project" value="EnsemblFungi"/>
</dbReference>
<dbReference type="GO" id="GO:0005096">
    <property type="term" value="F:GTPase activator activity"/>
    <property type="evidence" value="ECO:0007669"/>
    <property type="project" value="EnsemblFungi"/>
</dbReference>
<dbReference type="GO" id="GO:0006865">
    <property type="term" value="P:amino acid transport"/>
    <property type="evidence" value="ECO:0007669"/>
    <property type="project" value="UniProtKB-KW"/>
</dbReference>
<dbReference type="GO" id="GO:0071230">
    <property type="term" value="P:cellular response to amino acid stimulus"/>
    <property type="evidence" value="ECO:0007669"/>
    <property type="project" value="EnsemblFungi"/>
</dbReference>
<dbReference type="GO" id="GO:1904263">
    <property type="term" value="P:positive regulation of TORC1 signaling"/>
    <property type="evidence" value="ECO:0007669"/>
    <property type="project" value="EnsemblFungi"/>
</dbReference>
<dbReference type="GO" id="GO:0015031">
    <property type="term" value="P:protein transport"/>
    <property type="evidence" value="ECO:0007669"/>
    <property type="project" value="UniProtKB-KW"/>
</dbReference>
<dbReference type="InterPro" id="IPR037545">
    <property type="entry name" value="DENN_FNIP1/2"/>
</dbReference>
<dbReference type="InterPro" id="IPR041153">
    <property type="entry name" value="LST4_longin"/>
</dbReference>
<dbReference type="Pfam" id="PF18639">
    <property type="entry name" value="Longin_2"/>
    <property type="match status" value="1"/>
</dbReference>
<dbReference type="PROSITE" id="PS51836">
    <property type="entry name" value="DENN_FNIP12"/>
    <property type="match status" value="1"/>
</dbReference>